<feature type="chain" id="PRO_1000213955" description="Uridylate kinase">
    <location>
        <begin position="1"/>
        <end position="226"/>
    </location>
</feature>
<feature type="binding site" evidence="1">
    <location>
        <begin position="6"/>
        <end position="10"/>
    </location>
    <ligand>
        <name>ATP</name>
        <dbReference type="ChEBI" id="CHEBI:30616"/>
    </ligand>
</feature>
<feature type="binding site" evidence="1">
    <location>
        <position position="43"/>
    </location>
    <ligand>
        <name>UMP</name>
        <dbReference type="ChEBI" id="CHEBI:57865"/>
    </ligand>
</feature>
<feature type="binding site" evidence="1">
    <location>
        <position position="44"/>
    </location>
    <ligand>
        <name>ATP</name>
        <dbReference type="ChEBI" id="CHEBI:30616"/>
    </ligand>
</feature>
<feature type="binding site" evidence="1">
    <location>
        <position position="48"/>
    </location>
    <ligand>
        <name>ATP</name>
        <dbReference type="ChEBI" id="CHEBI:30616"/>
    </ligand>
</feature>
<feature type="binding site" evidence="1">
    <location>
        <position position="65"/>
    </location>
    <ligand>
        <name>UMP</name>
        <dbReference type="ChEBI" id="CHEBI:57865"/>
    </ligand>
</feature>
<feature type="binding site" evidence="1">
    <location>
        <begin position="113"/>
        <end position="119"/>
    </location>
    <ligand>
        <name>UMP</name>
        <dbReference type="ChEBI" id="CHEBI:57865"/>
    </ligand>
</feature>
<feature type="binding site" evidence="1">
    <location>
        <position position="139"/>
    </location>
    <ligand>
        <name>ATP</name>
        <dbReference type="ChEBI" id="CHEBI:30616"/>
    </ligand>
</feature>
<feature type="binding site" evidence="1">
    <location>
        <position position="140"/>
    </location>
    <ligand>
        <name>ATP</name>
        <dbReference type="ChEBI" id="CHEBI:30616"/>
    </ligand>
</feature>
<feature type="binding site" evidence="1">
    <location>
        <position position="145"/>
    </location>
    <ligand>
        <name>ATP</name>
        <dbReference type="ChEBI" id="CHEBI:30616"/>
    </ligand>
</feature>
<feature type="binding site" evidence="1">
    <location>
        <position position="148"/>
    </location>
    <ligand>
        <name>ATP</name>
        <dbReference type="ChEBI" id="CHEBI:30616"/>
    </ligand>
</feature>
<dbReference type="EC" id="2.7.4.22" evidence="1"/>
<dbReference type="EMBL" id="CP001402">
    <property type="protein sequence ID" value="ACR41835.1"/>
    <property type="molecule type" value="Genomic_DNA"/>
</dbReference>
<dbReference type="RefSeq" id="WP_012711255.1">
    <property type="nucleotide sequence ID" value="NC_012726.1"/>
</dbReference>
<dbReference type="SMR" id="C4KGX1"/>
<dbReference type="GeneID" id="15297604"/>
<dbReference type="GeneID" id="84061562"/>
<dbReference type="KEGG" id="sid:M164_1231"/>
<dbReference type="HOGENOM" id="CLU_079546_0_0_2"/>
<dbReference type="UniPathway" id="UPA00159">
    <property type="reaction ID" value="UER00275"/>
</dbReference>
<dbReference type="Proteomes" id="UP000001479">
    <property type="component" value="Chromosome"/>
</dbReference>
<dbReference type="GO" id="GO:0005737">
    <property type="term" value="C:cytoplasm"/>
    <property type="evidence" value="ECO:0007669"/>
    <property type="project" value="UniProtKB-SubCell"/>
</dbReference>
<dbReference type="GO" id="GO:0005524">
    <property type="term" value="F:ATP binding"/>
    <property type="evidence" value="ECO:0007669"/>
    <property type="project" value="UniProtKB-KW"/>
</dbReference>
<dbReference type="GO" id="GO:0033862">
    <property type="term" value="F:UMP kinase activity"/>
    <property type="evidence" value="ECO:0007669"/>
    <property type="project" value="UniProtKB-EC"/>
</dbReference>
<dbReference type="GO" id="GO:0044210">
    <property type="term" value="P:'de novo' CTP biosynthetic process"/>
    <property type="evidence" value="ECO:0007669"/>
    <property type="project" value="UniProtKB-UniRule"/>
</dbReference>
<dbReference type="GO" id="GO:0006225">
    <property type="term" value="P:UDP biosynthetic process"/>
    <property type="evidence" value="ECO:0007669"/>
    <property type="project" value="TreeGrafter"/>
</dbReference>
<dbReference type="CDD" id="cd04253">
    <property type="entry name" value="AAK_UMPK-PyrH-Pf"/>
    <property type="match status" value="1"/>
</dbReference>
<dbReference type="FunFam" id="3.40.1160.10:FF:000030">
    <property type="entry name" value="Uridylate kinase"/>
    <property type="match status" value="1"/>
</dbReference>
<dbReference type="Gene3D" id="3.40.1160.10">
    <property type="entry name" value="Acetylglutamate kinase-like"/>
    <property type="match status" value="1"/>
</dbReference>
<dbReference type="HAMAP" id="MF_01220_A">
    <property type="entry name" value="PyrH_A"/>
    <property type="match status" value="1"/>
</dbReference>
<dbReference type="InterPro" id="IPR036393">
    <property type="entry name" value="AceGlu_kinase-like_sf"/>
</dbReference>
<dbReference type="InterPro" id="IPR001048">
    <property type="entry name" value="Asp/Glu/Uridylate_kinase"/>
</dbReference>
<dbReference type="InterPro" id="IPR011817">
    <property type="entry name" value="Uridylate_kinase"/>
</dbReference>
<dbReference type="InterPro" id="IPR011818">
    <property type="entry name" value="Uridylate_kinase_arch/spir"/>
</dbReference>
<dbReference type="NCBIfam" id="TIGR02076">
    <property type="entry name" value="pyrH_arch"/>
    <property type="match status" value="1"/>
</dbReference>
<dbReference type="PANTHER" id="PTHR42833">
    <property type="entry name" value="URIDYLATE KINASE"/>
    <property type="match status" value="1"/>
</dbReference>
<dbReference type="PANTHER" id="PTHR42833:SF4">
    <property type="entry name" value="URIDYLATE KINASE PUMPKIN, CHLOROPLASTIC"/>
    <property type="match status" value="1"/>
</dbReference>
<dbReference type="Pfam" id="PF00696">
    <property type="entry name" value="AA_kinase"/>
    <property type="match status" value="1"/>
</dbReference>
<dbReference type="PIRSF" id="PIRSF005650">
    <property type="entry name" value="Uridylate_kin"/>
    <property type="match status" value="1"/>
</dbReference>
<dbReference type="SUPFAM" id="SSF53633">
    <property type="entry name" value="Carbamate kinase-like"/>
    <property type="match status" value="1"/>
</dbReference>
<organism>
    <name type="scientific">Saccharolobus islandicus (strain M.16.4 / Kamchatka #3)</name>
    <name type="common">Sulfolobus islandicus</name>
    <dbReference type="NCBI Taxonomy" id="426118"/>
    <lineage>
        <taxon>Archaea</taxon>
        <taxon>Thermoproteota</taxon>
        <taxon>Thermoprotei</taxon>
        <taxon>Sulfolobales</taxon>
        <taxon>Sulfolobaceae</taxon>
        <taxon>Saccharolobus</taxon>
    </lineage>
</organism>
<keyword id="KW-0067">ATP-binding</keyword>
<keyword id="KW-0963">Cytoplasm</keyword>
<keyword id="KW-0418">Kinase</keyword>
<keyword id="KW-0547">Nucleotide-binding</keyword>
<keyword id="KW-0665">Pyrimidine biosynthesis</keyword>
<keyword id="KW-0808">Transferase</keyword>
<gene>
    <name evidence="1" type="primary">pyrH</name>
    <name type="ordered locus">M164_1231</name>
</gene>
<comment type="function">
    <text evidence="1">Catalyzes the reversible phosphorylation of UMP to UDP.</text>
</comment>
<comment type="catalytic activity">
    <reaction evidence="1">
        <text>UMP + ATP = UDP + ADP</text>
        <dbReference type="Rhea" id="RHEA:24400"/>
        <dbReference type="ChEBI" id="CHEBI:30616"/>
        <dbReference type="ChEBI" id="CHEBI:57865"/>
        <dbReference type="ChEBI" id="CHEBI:58223"/>
        <dbReference type="ChEBI" id="CHEBI:456216"/>
        <dbReference type="EC" id="2.7.4.22"/>
    </reaction>
</comment>
<comment type="activity regulation">
    <text evidence="1">Inhibited by UTP.</text>
</comment>
<comment type="pathway">
    <text evidence="1">Pyrimidine metabolism; CTP biosynthesis via de novo pathway; UDP from UMP (UMPK route): step 1/1.</text>
</comment>
<comment type="subunit">
    <text evidence="1">Homohexamer.</text>
</comment>
<comment type="subcellular location">
    <subcellularLocation>
        <location evidence="1">Cytoplasm</location>
    </subcellularLocation>
</comment>
<comment type="similarity">
    <text evidence="1">Belongs to the UMP kinase family.</text>
</comment>
<accession>C4KGX1</accession>
<name>PYRH_SACI6</name>
<evidence type="ECO:0000255" key="1">
    <source>
        <dbReference type="HAMAP-Rule" id="MF_01220"/>
    </source>
</evidence>
<reference key="1">
    <citation type="journal article" date="2009" name="Proc. Natl. Acad. Sci. U.S.A.">
        <title>Biogeography of the Sulfolobus islandicus pan-genome.</title>
        <authorList>
            <person name="Reno M.L."/>
            <person name="Held N.L."/>
            <person name="Fields C.J."/>
            <person name="Burke P.V."/>
            <person name="Whitaker R.J."/>
        </authorList>
    </citation>
    <scope>NUCLEOTIDE SEQUENCE [LARGE SCALE GENOMIC DNA]</scope>
    <source>
        <strain>M.16.4 / Kamchatka #3</strain>
    </source>
</reference>
<sequence length="226" mass="25050">MNIILKISGKFFDEDNVNNLIVLRESIRELTDNGFRVGIVTGGGSTARRYIKLAREIGIGEAYLDLLGIWASRLNAYLVMFSLQDLAYMHVPQSLEEFIQDWSHGKVVVTGGFQPGQSTAAVAALVAEASSSKTLVVATNVDGVYEKDPRVYTDVKLIPHLTTQDLRKILEGSQSVQAGTYELLDPLAIKIVERSKIRVVVMNYRKLNRIINILKGEEVSSIIEPT</sequence>
<protein>
    <recommendedName>
        <fullName evidence="1">Uridylate kinase</fullName>
        <shortName evidence="1">UK</shortName>
        <ecNumber evidence="1">2.7.4.22</ecNumber>
    </recommendedName>
    <alternativeName>
        <fullName evidence="1">Uridine monophosphate kinase</fullName>
        <shortName evidence="1">UMP kinase</shortName>
        <shortName evidence="1">UMPK</shortName>
    </alternativeName>
</protein>
<proteinExistence type="inferred from homology"/>